<proteinExistence type="inferred from homology"/>
<keyword id="KW-0687">Ribonucleoprotein</keyword>
<keyword id="KW-0689">Ribosomal protein</keyword>
<keyword id="KW-0694">RNA-binding</keyword>
<keyword id="KW-0699">rRNA-binding</keyword>
<organism>
    <name type="scientific">Yersinia pestis bv. Antiqua (strain Antiqua)</name>
    <dbReference type="NCBI Taxonomy" id="360102"/>
    <lineage>
        <taxon>Bacteria</taxon>
        <taxon>Pseudomonadati</taxon>
        <taxon>Pseudomonadota</taxon>
        <taxon>Gammaproteobacteria</taxon>
        <taxon>Enterobacterales</taxon>
        <taxon>Yersiniaceae</taxon>
        <taxon>Yersinia</taxon>
    </lineage>
</organism>
<reference key="1">
    <citation type="journal article" date="2006" name="J. Bacteriol.">
        <title>Complete genome sequence of Yersinia pestis strains Antiqua and Nepal516: evidence of gene reduction in an emerging pathogen.</title>
        <authorList>
            <person name="Chain P.S.G."/>
            <person name="Hu P."/>
            <person name="Malfatti S.A."/>
            <person name="Radnedge L."/>
            <person name="Larimer F."/>
            <person name="Vergez L.M."/>
            <person name="Worsham P."/>
            <person name="Chu M.C."/>
            <person name="Andersen G.L."/>
        </authorList>
    </citation>
    <scope>NUCLEOTIDE SEQUENCE [LARGE SCALE GENOMIC DNA]</scope>
    <source>
        <strain>Antiqua</strain>
    </source>
</reference>
<feature type="chain" id="PRO_0000269436" description="Large ribosomal subunit protein bL21">
    <location>
        <begin position="1"/>
        <end position="103"/>
    </location>
</feature>
<dbReference type="EMBL" id="CP000308">
    <property type="protein sequence ID" value="ABG12031.1"/>
    <property type="molecule type" value="Genomic_DNA"/>
</dbReference>
<dbReference type="RefSeq" id="WP_002210178.1">
    <property type="nucleotide sequence ID" value="NZ_CP009906.1"/>
</dbReference>
<dbReference type="SMR" id="Q1CBZ1"/>
<dbReference type="GeneID" id="57975202"/>
<dbReference type="KEGG" id="ypa:YPA_0062"/>
<dbReference type="Proteomes" id="UP000001971">
    <property type="component" value="Chromosome"/>
</dbReference>
<dbReference type="GO" id="GO:0005737">
    <property type="term" value="C:cytoplasm"/>
    <property type="evidence" value="ECO:0007669"/>
    <property type="project" value="UniProtKB-ARBA"/>
</dbReference>
<dbReference type="GO" id="GO:1990904">
    <property type="term" value="C:ribonucleoprotein complex"/>
    <property type="evidence" value="ECO:0007669"/>
    <property type="project" value="UniProtKB-KW"/>
</dbReference>
<dbReference type="GO" id="GO:0005840">
    <property type="term" value="C:ribosome"/>
    <property type="evidence" value="ECO:0007669"/>
    <property type="project" value="UniProtKB-KW"/>
</dbReference>
<dbReference type="GO" id="GO:0019843">
    <property type="term" value="F:rRNA binding"/>
    <property type="evidence" value="ECO:0007669"/>
    <property type="project" value="UniProtKB-UniRule"/>
</dbReference>
<dbReference type="GO" id="GO:0003735">
    <property type="term" value="F:structural constituent of ribosome"/>
    <property type="evidence" value="ECO:0007669"/>
    <property type="project" value="InterPro"/>
</dbReference>
<dbReference type="GO" id="GO:0006412">
    <property type="term" value="P:translation"/>
    <property type="evidence" value="ECO:0007669"/>
    <property type="project" value="UniProtKB-UniRule"/>
</dbReference>
<dbReference type="HAMAP" id="MF_01363">
    <property type="entry name" value="Ribosomal_bL21"/>
    <property type="match status" value="1"/>
</dbReference>
<dbReference type="InterPro" id="IPR028909">
    <property type="entry name" value="bL21-like"/>
</dbReference>
<dbReference type="InterPro" id="IPR036164">
    <property type="entry name" value="bL21-like_sf"/>
</dbReference>
<dbReference type="InterPro" id="IPR001787">
    <property type="entry name" value="Ribosomal_bL21"/>
</dbReference>
<dbReference type="InterPro" id="IPR018258">
    <property type="entry name" value="Ribosomal_bL21_CS"/>
</dbReference>
<dbReference type="NCBIfam" id="TIGR00061">
    <property type="entry name" value="L21"/>
    <property type="match status" value="1"/>
</dbReference>
<dbReference type="PANTHER" id="PTHR21349">
    <property type="entry name" value="50S RIBOSOMAL PROTEIN L21"/>
    <property type="match status" value="1"/>
</dbReference>
<dbReference type="PANTHER" id="PTHR21349:SF0">
    <property type="entry name" value="LARGE RIBOSOMAL SUBUNIT PROTEIN BL21M"/>
    <property type="match status" value="1"/>
</dbReference>
<dbReference type="Pfam" id="PF00829">
    <property type="entry name" value="Ribosomal_L21p"/>
    <property type="match status" value="1"/>
</dbReference>
<dbReference type="SUPFAM" id="SSF141091">
    <property type="entry name" value="L21p-like"/>
    <property type="match status" value="1"/>
</dbReference>
<dbReference type="PROSITE" id="PS01169">
    <property type="entry name" value="RIBOSOMAL_L21"/>
    <property type="match status" value="1"/>
</dbReference>
<name>RL21_YERPA</name>
<comment type="function">
    <text evidence="1">This protein binds to 23S rRNA in the presence of protein L20.</text>
</comment>
<comment type="subunit">
    <text evidence="1">Part of the 50S ribosomal subunit. Contacts protein L20.</text>
</comment>
<comment type="similarity">
    <text evidence="1">Belongs to the bacterial ribosomal protein bL21 family.</text>
</comment>
<protein>
    <recommendedName>
        <fullName evidence="1">Large ribosomal subunit protein bL21</fullName>
    </recommendedName>
    <alternativeName>
        <fullName evidence="2">50S ribosomal protein L21</fullName>
    </alternativeName>
</protein>
<gene>
    <name evidence="1" type="primary">rplU</name>
    <name type="ordered locus">YPA_0062</name>
</gene>
<accession>Q1CBZ1</accession>
<sequence>MYAVFQSGGKQHRVSEGQTIRLEKLDIATGETIEFDQVLMIANGEEINIGAPLVDGGKIKAEIIAHGRGEKIKIVKFRRRKHYRKQQGHRQWFTDVKITGISA</sequence>
<evidence type="ECO:0000255" key="1">
    <source>
        <dbReference type="HAMAP-Rule" id="MF_01363"/>
    </source>
</evidence>
<evidence type="ECO:0000305" key="2"/>